<reference key="1">
    <citation type="journal article" date="2005" name="Brain Res. Mol. Brain Res.">
        <title>Cloning and expression of MRG receptors in macaque, mouse, and human.</title>
        <authorList>
            <person name="Zhang L."/>
            <person name="Taylor N."/>
            <person name="Xie Y."/>
            <person name="Ford R."/>
            <person name="Johnson J."/>
            <person name="Paulsen J.E."/>
            <person name="Bates B."/>
        </authorList>
    </citation>
    <scope>NUCLEOTIDE SEQUENCE [GENOMIC DNA]</scope>
</reference>
<comment type="function">
    <text>Orphan receptor. May regulate nociceptor function and/or development, including the sensation or modulation of pain.</text>
</comment>
<comment type="subcellular location">
    <subcellularLocation>
        <location>Cell membrane</location>
        <topology>Multi-pass membrane protein</topology>
    </subcellularLocation>
</comment>
<comment type="similarity">
    <text evidence="2">Belongs to the G-protein coupled receptor 1 family. Mas subfamily.</text>
</comment>
<proteinExistence type="inferred from homology"/>
<gene>
    <name type="primary">MRGPRE</name>
    <name type="synonym">MRGE</name>
</gene>
<organism>
    <name type="scientific">Macaca fascicularis</name>
    <name type="common">Crab-eating macaque</name>
    <name type="synonym">Cynomolgus monkey</name>
    <dbReference type="NCBI Taxonomy" id="9541"/>
    <lineage>
        <taxon>Eukaryota</taxon>
        <taxon>Metazoa</taxon>
        <taxon>Chordata</taxon>
        <taxon>Craniata</taxon>
        <taxon>Vertebrata</taxon>
        <taxon>Euteleostomi</taxon>
        <taxon>Mammalia</taxon>
        <taxon>Eutheria</taxon>
        <taxon>Euarchontoglires</taxon>
        <taxon>Primates</taxon>
        <taxon>Haplorrhini</taxon>
        <taxon>Catarrhini</taxon>
        <taxon>Cercopithecidae</taxon>
        <taxon>Cercopithecinae</taxon>
        <taxon>Macaca</taxon>
    </lineage>
</organism>
<evidence type="ECO:0000255" key="1"/>
<evidence type="ECO:0000255" key="2">
    <source>
        <dbReference type="PROSITE-ProRule" id="PRU00521"/>
    </source>
</evidence>
<name>MRGRE_MACFA</name>
<dbReference type="EMBL" id="AY772460">
    <property type="protein sequence ID" value="AAV49127.1"/>
    <property type="molecule type" value="Genomic_DNA"/>
</dbReference>
<dbReference type="SMR" id="Q5U9D7"/>
<dbReference type="eggNOG" id="ENOG502TKZN">
    <property type="taxonomic scope" value="Eukaryota"/>
</dbReference>
<dbReference type="Proteomes" id="UP000233100">
    <property type="component" value="Unplaced"/>
</dbReference>
<dbReference type="GO" id="GO:0005886">
    <property type="term" value="C:plasma membrane"/>
    <property type="evidence" value="ECO:0007669"/>
    <property type="project" value="UniProtKB-SubCell"/>
</dbReference>
<dbReference type="GO" id="GO:0004930">
    <property type="term" value="F:G protein-coupled receptor activity"/>
    <property type="evidence" value="ECO:0007669"/>
    <property type="project" value="UniProtKB-KW"/>
</dbReference>
<dbReference type="FunFam" id="1.20.1070.10:FF:000193">
    <property type="entry name" value="Mas-related G-protein coupled receptor member E"/>
    <property type="match status" value="1"/>
</dbReference>
<dbReference type="Gene3D" id="1.20.1070.10">
    <property type="entry name" value="Rhodopsin 7-helix transmembrane proteins"/>
    <property type="match status" value="1"/>
</dbReference>
<dbReference type="InterPro" id="IPR000276">
    <property type="entry name" value="GPCR_Rhodpsn"/>
</dbReference>
<dbReference type="InterPro" id="IPR017452">
    <property type="entry name" value="GPCR_Rhodpsn_7TM"/>
</dbReference>
<dbReference type="InterPro" id="IPR026230">
    <property type="entry name" value="MRGPCRE"/>
</dbReference>
<dbReference type="InterPro" id="IPR026234">
    <property type="entry name" value="MRGPCRFAMILY"/>
</dbReference>
<dbReference type="PANTHER" id="PTHR11334">
    <property type="entry name" value="MAS-RELATED G-PROTEIN COUPLED RECEPTOR"/>
    <property type="match status" value="1"/>
</dbReference>
<dbReference type="PANTHER" id="PTHR11334:SF26">
    <property type="entry name" value="MAS-RELATED G-PROTEIN COUPLED RECEPTOR MEMBER E"/>
    <property type="match status" value="1"/>
</dbReference>
<dbReference type="Pfam" id="PF00001">
    <property type="entry name" value="7tm_1"/>
    <property type="match status" value="1"/>
</dbReference>
<dbReference type="PRINTS" id="PR00237">
    <property type="entry name" value="GPCRRHODOPSN"/>
</dbReference>
<dbReference type="PRINTS" id="PR02111">
    <property type="entry name" value="MRGPCRE"/>
</dbReference>
<dbReference type="PRINTS" id="PR02108">
    <property type="entry name" value="MRGPCRFAMILY"/>
</dbReference>
<dbReference type="SUPFAM" id="SSF81321">
    <property type="entry name" value="Family A G protein-coupled receptor-like"/>
    <property type="match status" value="1"/>
</dbReference>
<dbReference type="PROSITE" id="PS50262">
    <property type="entry name" value="G_PROTEIN_RECEP_F1_2"/>
    <property type="match status" value="1"/>
</dbReference>
<keyword id="KW-1003">Cell membrane</keyword>
<keyword id="KW-0297">G-protein coupled receptor</keyword>
<keyword id="KW-0472">Membrane</keyword>
<keyword id="KW-0675">Receptor</keyword>
<keyword id="KW-1185">Reference proteome</keyword>
<keyword id="KW-0807">Transducer</keyword>
<keyword id="KW-0812">Transmembrane</keyword>
<keyword id="KW-1133">Transmembrane helix</keyword>
<protein>
    <recommendedName>
        <fullName>Mas-related G-protein coupled receptor member E</fullName>
    </recommendedName>
</protein>
<accession>Q5U9D7</accession>
<sequence>MEPREAGQHAGAADGAQEDVAFNLVILSLTEGLGLGGLLGNGAVLWLLSSNVYRNPFAIYLLDVACADLIFLGCHMVAIIPDLLQGRLDFPGFVQTSLATLRFFCYIVGLSLLVAVSVEQCLAALFPAWYSCRRPRHLTTCVCALTWACCLLLHLLLSGACTQFFGEPSRHLCRTLWLVAAVLLAVLCCTMCGASLMLLLQVERGPQRPPPRGFPTLILLAVLLFLFCGLPFGIYWLSRNLLWHIPHYFYHFSFLTAAVYCAAKPVVYFCLGSAQGRRLPLRLVLQRALGDEAELGAVRETSRRGLVDIAA</sequence>
<feature type="chain" id="PRO_0000069761" description="Mas-related G-protein coupled receptor member E">
    <location>
        <begin position="1"/>
        <end position="311"/>
    </location>
</feature>
<feature type="topological domain" description="Extracellular" evidence="1">
    <location>
        <begin position="1"/>
        <end position="25"/>
    </location>
</feature>
<feature type="transmembrane region" description="Helical; Name=1" evidence="1">
    <location>
        <begin position="26"/>
        <end position="46"/>
    </location>
</feature>
<feature type="topological domain" description="Cytoplasmic" evidence="1">
    <location>
        <begin position="47"/>
        <end position="63"/>
    </location>
</feature>
<feature type="transmembrane region" description="Helical; Name=2" evidence="1">
    <location>
        <begin position="64"/>
        <end position="84"/>
    </location>
</feature>
<feature type="topological domain" description="Extracellular" evidence="1">
    <location>
        <begin position="85"/>
        <end position="95"/>
    </location>
</feature>
<feature type="transmembrane region" description="Helical; Name=3" evidence="1">
    <location>
        <begin position="96"/>
        <end position="116"/>
    </location>
</feature>
<feature type="topological domain" description="Cytoplasmic" evidence="1">
    <location>
        <begin position="117"/>
        <end position="136"/>
    </location>
</feature>
<feature type="transmembrane region" description="Helical; Name=4" evidence="1">
    <location>
        <begin position="137"/>
        <end position="157"/>
    </location>
</feature>
<feature type="topological domain" description="Extracellular" evidence="1">
    <location>
        <begin position="158"/>
        <end position="177"/>
    </location>
</feature>
<feature type="transmembrane region" description="Helical; Name=5" evidence="1">
    <location>
        <begin position="178"/>
        <end position="198"/>
    </location>
</feature>
<feature type="topological domain" description="Cytoplasmic" evidence="1">
    <location>
        <begin position="199"/>
        <end position="216"/>
    </location>
</feature>
<feature type="transmembrane region" description="Helical; Name=6" evidence="1">
    <location>
        <begin position="217"/>
        <end position="237"/>
    </location>
</feature>
<feature type="topological domain" description="Extracellular" evidence="1">
    <location>
        <begin position="238"/>
        <end position="251"/>
    </location>
</feature>
<feature type="transmembrane region" description="Helical; Name=7" evidence="1">
    <location>
        <begin position="252"/>
        <end position="272"/>
    </location>
</feature>
<feature type="topological domain" description="Cytoplasmic" evidence="1">
    <location>
        <begin position="273"/>
        <end position="311"/>
    </location>
</feature>